<protein>
    <recommendedName>
        <fullName>Actin-related protein 2</fullName>
    </recommendedName>
    <alternativeName>
        <fullName>Actin-like protein 2</fullName>
    </alternativeName>
</protein>
<keyword id="KW-0009">Actin-binding</keyword>
<keyword id="KW-0067">ATP-binding</keyword>
<keyword id="KW-0963">Cytoplasm</keyword>
<keyword id="KW-0206">Cytoskeleton</keyword>
<keyword id="KW-0547">Nucleotide-binding</keyword>
<keyword id="KW-1185">Reference proteome</keyword>
<reference key="1">
    <citation type="journal article" date="2003" name="PLoS Biol.">
        <title>The genome sequence of Caenorhabditis briggsae: a platform for comparative genomics.</title>
        <authorList>
            <person name="Stein L.D."/>
            <person name="Bao Z."/>
            <person name="Blasiar D."/>
            <person name="Blumenthal T."/>
            <person name="Brent M.R."/>
            <person name="Chen N."/>
            <person name="Chinwalla A."/>
            <person name="Clarke L."/>
            <person name="Clee C."/>
            <person name="Coghlan A."/>
            <person name="Coulson A."/>
            <person name="D'Eustachio P."/>
            <person name="Fitch D.H.A."/>
            <person name="Fulton L.A."/>
            <person name="Fulton R.E."/>
            <person name="Griffiths-Jones S."/>
            <person name="Harris T.W."/>
            <person name="Hillier L.W."/>
            <person name="Kamath R."/>
            <person name="Kuwabara P.E."/>
            <person name="Mardis E.R."/>
            <person name="Marra M.A."/>
            <person name="Miner T.L."/>
            <person name="Minx P."/>
            <person name="Mullikin J.C."/>
            <person name="Plumb R.W."/>
            <person name="Rogers J."/>
            <person name="Schein J.E."/>
            <person name="Sohrmann M."/>
            <person name="Spieth J."/>
            <person name="Stajich J.E."/>
            <person name="Wei C."/>
            <person name="Willey D."/>
            <person name="Wilson R.K."/>
            <person name="Durbin R.M."/>
            <person name="Waterston R.H."/>
        </authorList>
    </citation>
    <scope>NUCLEOTIDE SEQUENCE [LARGE SCALE GENOMIC DNA]</scope>
    <source>
        <strain>AF16</strain>
    </source>
</reference>
<dbReference type="EMBL" id="HE600998">
    <property type="protein sequence ID" value="CAP29022.3"/>
    <property type="molecule type" value="Genomic_DNA"/>
</dbReference>
<dbReference type="SMR" id="Q61JZ2"/>
<dbReference type="FunCoup" id="Q61JZ2">
    <property type="interactions" value="2499"/>
</dbReference>
<dbReference type="STRING" id="6238.Q61JZ2"/>
<dbReference type="KEGG" id="cbr:CBG_09586"/>
<dbReference type="CTD" id="8579083"/>
<dbReference type="WormBase" id="CBG09586">
    <property type="protein sequence ID" value="CBP38609"/>
    <property type="gene ID" value="WBGene00031147"/>
    <property type="gene designation" value="Cbr-arx-2"/>
</dbReference>
<dbReference type="eggNOG" id="KOG0677">
    <property type="taxonomic scope" value="Eukaryota"/>
</dbReference>
<dbReference type="HOGENOM" id="CLU_027965_0_0_1"/>
<dbReference type="InParanoid" id="Q61JZ2"/>
<dbReference type="OMA" id="WEDMQHL"/>
<dbReference type="Proteomes" id="UP000008549">
    <property type="component" value="Unassembled WGS sequence"/>
</dbReference>
<dbReference type="GO" id="GO:0005885">
    <property type="term" value="C:Arp2/3 protein complex"/>
    <property type="evidence" value="ECO:0000318"/>
    <property type="project" value="GO_Central"/>
</dbReference>
<dbReference type="GO" id="GO:0005938">
    <property type="term" value="C:cell cortex"/>
    <property type="evidence" value="ECO:0000318"/>
    <property type="project" value="GO_Central"/>
</dbReference>
<dbReference type="GO" id="GO:0003779">
    <property type="term" value="F:actin binding"/>
    <property type="evidence" value="ECO:0007669"/>
    <property type="project" value="UniProtKB-KW"/>
</dbReference>
<dbReference type="GO" id="GO:0005524">
    <property type="term" value="F:ATP binding"/>
    <property type="evidence" value="ECO:0007669"/>
    <property type="project" value="UniProtKB-KW"/>
</dbReference>
<dbReference type="GO" id="GO:0034314">
    <property type="term" value="P:Arp2/3 complex-mediated actin nucleation"/>
    <property type="evidence" value="ECO:0000318"/>
    <property type="project" value="GO_Central"/>
</dbReference>
<dbReference type="CDD" id="cd10220">
    <property type="entry name" value="ASKHA_NBD_Arp2"/>
    <property type="match status" value="1"/>
</dbReference>
<dbReference type="FunFam" id="3.30.420.40:FF:000538">
    <property type="entry name" value="Actin-related protein 2"/>
    <property type="match status" value="1"/>
</dbReference>
<dbReference type="FunFam" id="3.90.640.10:FF:000005">
    <property type="entry name" value="Actin-related protein 2"/>
    <property type="match status" value="1"/>
</dbReference>
<dbReference type="Gene3D" id="3.30.420.40">
    <property type="match status" value="2"/>
</dbReference>
<dbReference type="Gene3D" id="3.90.640.10">
    <property type="entry name" value="Actin, Chain A, domain 4"/>
    <property type="match status" value="1"/>
</dbReference>
<dbReference type="InterPro" id="IPR004000">
    <property type="entry name" value="Actin"/>
</dbReference>
<dbReference type="InterPro" id="IPR020902">
    <property type="entry name" value="Actin/actin-like_CS"/>
</dbReference>
<dbReference type="InterPro" id="IPR004001">
    <property type="entry name" value="Actin_CS"/>
</dbReference>
<dbReference type="InterPro" id="IPR043129">
    <property type="entry name" value="ATPase_NBD"/>
</dbReference>
<dbReference type="PANTHER" id="PTHR11937">
    <property type="entry name" value="ACTIN"/>
    <property type="match status" value="1"/>
</dbReference>
<dbReference type="Pfam" id="PF00022">
    <property type="entry name" value="Actin"/>
    <property type="match status" value="1"/>
</dbReference>
<dbReference type="PRINTS" id="PR00190">
    <property type="entry name" value="ACTIN"/>
</dbReference>
<dbReference type="SMART" id="SM00268">
    <property type="entry name" value="ACTIN"/>
    <property type="match status" value="1"/>
</dbReference>
<dbReference type="SUPFAM" id="SSF53067">
    <property type="entry name" value="Actin-like ATPase domain"/>
    <property type="match status" value="2"/>
</dbReference>
<dbReference type="PROSITE" id="PS00432">
    <property type="entry name" value="ACTINS_2"/>
    <property type="match status" value="1"/>
</dbReference>
<dbReference type="PROSITE" id="PS01132">
    <property type="entry name" value="ACTINS_ACT_LIKE"/>
    <property type="match status" value="1"/>
</dbReference>
<sequence>MDSQGRKVIVVDNGTGFVKCGYAGTNFPAHIFPSMVGRPIVRSTQRVGNIEIKDLMVGEECSQLRQMLDINYPMDNGIVRNWDDMGHVWDHTFGPEKLDIDPKECKLLLTEPPLNPNSNREKMFQVMFEQYGFNSIYVAAVLTLYAQGLLTGVVVDSGDGVTHICPVYEGFALHHLTRRLDIAGRDITKYLIKLLLQRGYNFNHSADFETVRQMKEKLCYIAYDVEQEERLALETTVLSQQYTLPDGRVIRLGGERFEAPEILFQPHLINVEKAGLSELLFGCIQASDIDTRLDFYKHIVLSGGTTMYPGLPSRLEKELKQLYLDRVLHGNTDAFQKFKIRIEAPPSRKHMVFLGGAVLANLMKDRDQDFWVSKKEYEEGGIARCMAKLGIKA</sequence>
<gene>
    <name type="primary">arx-2</name>
    <name type="ORF">CBG09586</name>
</gene>
<proteinExistence type="inferred from homology"/>
<feature type="chain" id="PRO_0000089073" description="Actin-related protein 2">
    <location>
        <begin position="1"/>
        <end position="393"/>
    </location>
</feature>
<feature type="binding site" evidence="1">
    <location>
        <begin position="158"/>
        <end position="160"/>
    </location>
    <ligand>
        <name>ATP</name>
        <dbReference type="ChEBI" id="CHEBI:30616"/>
    </ligand>
</feature>
<feature type="binding site" evidence="1">
    <location>
        <begin position="212"/>
        <end position="216"/>
    </location>
    <ligand>
        <name>ATP</name>
        <dbReference type="ChEBI" id="CHEBI:30616"/>
    </ligand>
</feature>
<feature type="binding site" evidence="1">
    <location>
        <begin position="303"/>
        <end position="308"/>
    </location>
    <ligand>
        <name>ATP</name>
        <dbReference type="ChEBI" id="CHEBI:30616"/>
    </ligand>
</feature>
<organism>
    <name type="scientific">Caenorhabditis briggsae</name>
    <dbReference type="NCBI Taxonomy" id="6238"/>
    <lineage>
        <taxon>Eukaryota</taxon>
        <taxon>Metazoa</taxon>
        <taxon>Ecdysozoa</taxon>
        <taxon>Nematoda</taxon>
        <taxon>Chromadorea</taxon>
        <taxon>Rhabditida</taxon>
        <taxon>Rhabditina</taxon>
        <taxon>Rhabditomorpha</taxon>
        <taxon>Rhabditoidea</taxon>
        <taxon>Rhabditidae</taxon>
        <taxon>Peloderinae</taxon>
        <taxon>Caenorhabditis</taxon>
    </lineage>
</organism>
<comment type="function">
    <text evidence="1">Functions as ATP-binding component of the Arp2/3 complex which is involved in regulation of actin polymerization and together with an activating nucleation-promoting factor (NPF) mediates the formation of branched actin networks. Seems to contact the pointed end of the daughter actin filament (By similarity).</text>
</comment>
<comment type="subunit">
    <text evidence="1">Component of the Arp2/3 complex.</text>
</comment>
<comment type="subcellular location">
    <subcellularLocation>
        <location evidence="1">Cytoplasm</location>
        <location evidence="1">Cytoskeleton</location>
    </subcellularLocation>
</comment>
<comment type="similarity">
    <text evidence="2">Belongs to the actin family. ARP2 subfamily.</text>
</comment>
<accession>Q61JZ2</accession>
<accession>A8X8R1</accession>
<name>ARP2_CAEBR</name>
<evidence type="ECO:0000250" key="1"/>
<evidence type="ECO:0000305" key="2"/>